<sequence>MFNELVKKIKSGLEITFEEALALGGLDEDRLNELFLAALQVNRHFHGNRVDLCSIVNARSGRCSEDCAFCAQSGHYRTEAPVYPLLSKEEILERAREMELRGARRFALVTSGRGISESDFEKVLDIYQMLKEKTGLGLCASLGIIGYDKAVRLKEAGVGMYHHNLETCRSYFPHICTTHSFDERVETVKAAKEAGLEVCSGGIIGLGESWRHRVEMAFHLKELGVASVPINILTPVKGTPLWGRPLLEPVEVLRTAAMFRLVLPGALIRLCGGREAALRDLQPLALLAGVNALMVGNYLTTSGRRVEDDLQMVADLKLSVM</sequence>
<dbReference type="EC" id="2.8.1.6" evidence="1"/>
<dbReference type="EMBL" id="AP009389">
    <property type="protein sequence ID" value="BAF58702.1"/>
    <property type="molecule type" value="Genomic_DNA"/>
</dbReference>
<dbReference type="SMR" id="A5D4Y6"/>
<dbReference type="STRING" id="370438.PTH_0521"/>
<dbReference type="KEGG" id="pth:PTH_0521"/>
<dbReference type="eggNOG" id="COG0502">
    <property type="taxonomic scope" value="Bacteria"/>
</dbReference>
<dbReference type="HOGENOM" id="CLU_033172_2_1_9"/>
<dbReference type="UniPathway" id="UPA00078">
    <property type="reaction ID" value="UER00162"/>
</dbReference>
<dbReference type="Proteomes" id="UP000006556">
    <property type="component" value="Chromosome"/>
</dbReference>
<dbReference type="GO" id="GO:0051537">
    <property type="term" value="F:2 iron, 2 sulfur cluster binding"/>
    <property type="evidence" value="ECO:0007669"/>
    <property type="project" value="UniProtKB-KW"/>
</dbReference>
<dbReference type="GO" id="GO:0051539">
    <property type="term" value="F:4 iron, 4 sulfur cluster binding"/>
    <property type="evidence" value="ECO:0007669"/>
    <property type="project" value="UniProtKB-KW"/>
</dbReference>
<dbReference type="GO" id="GO:0004076">
    <property type="term" value="F:biotin synthase activity"/>
    <property type="evidence" value="ECO:0007669"/>
    <property type="project" value="UniProtKB-UniRule"/>
</dbReference>
<dbReference type="GO" id="GO:0005506">
    <property type="term" value="F:iron ion binding"/>
    <property type="evidence" value="ECO:0007669"/>
    <property type="project" value="UniProtKB-UniRule"/>
</dbReference>
<dbReference type="GO" id="GO:0009102">
    <property type="term" value="P:biotin biosynthetic process"/>
    <property type="evidence" value="ECO:0007669"/>
    <property type="project" value="UniProtKB-UniRule"/>
</dbReference>
<dbReference type="CDD" id="cd01335">
    <property type="entry name" value="Radical_SAM"/>
    <property type="match status" value="1"/>
</dbReference>
<dbReference type="FunFam" id="3.20.20.70:FF:000026">
    <property type="entry name" value="Biotin synthase"/>
    <property type="match status" value="1"/>
</dbReference>
<dbReference type="Gene3D" id="3.20.20.70">
    <property type="entry name" value="Aldolase class I"/>
    <property type="match status" value="1"/>
</dbReference>
<dbReference type="HAMAP" id="MF_01694">
    <property type="entry name" value="BioB"/>
    <property type="match status" value="1"/>
</dbReference>
<dbReference type="InterPro" id="IPR013785">
    <property type="entry name" value="Aldolase_TIM"/>
</dbReference>
<dbReference type="InterPro" id="IPR010722">
    <property type="entry name" value="BATS_dom"/>
</dbReference>
<dbReference type="InterPro" id="IPR002684">
    <property type="entry name" value="Biotin_synth/BioAB"/>
</dbReference>
<dbReference type="InterPro" id="IPR024177">
    <property type="entry name" value="Biotin_synthase"/>
</dbReference>
<dbReference type="InterPro" id="IPR006638">
    <property type="entry name" value="Elp3/MiaA/NifB-like_rSAM"/>
</dbReference>
<dbReference type="InterPro" id="IPR007197">
    <property type="entry name" value="rSAM"/>
</dbReference>
<dbReference type="NCBIfam" id="TIGR00433">
    <property type="entry name" value="bioB"/>
    <property type="match status" value="1"/>
</dbReference>
<dbReference type="PANTHER" id="PTHR22976">
    <property type="entry name" value="BIOTIN SYNTHASE"/>
    <property type="match status" value="1"/>
</dbReference>
<dbReference type="PANTHER" id="PTHR22976:SF2">
    <property type="entry name" value="BIOTIN SYNTHASE, MITOCHONDRIAL"/>
    <property type="match status" value="1"/>
</dbReference>
<dbReference type="Pfam" id="PF06968">
    <property type="entry name" value="BATS"/>
    <property type="match status" value="1"/>
</dbReference>
<dbReference type="Pfam" id="PF04055">
    <property type="entry name" value="Radical_SAM"/>
    <property type="match status" value="1"/>
</dbReference>
<dbReference type="PIRSF" id="PIRSF001619">
    <property type="entry name" value="Biotin_synth"/>
    <property type="match status" value="1"/>
</dbReference>
<dbReference type="SFLD" id="SFLDG01060">
    <property type="entry name" value="BATS_domain_containing"/>
    <property type="match status" value="1"/>
</dbReference>
<dbReference type="SFLD" id="SFLDG01278">
    <property type="entry name" value="biotin_synthase_like"/>
    <property type="match status" value="1"/>
</dbReference>
<dbReference type="SMART" id="SM00876">
    <property type="entry name" value="BATS"/>
    <property type="match status" value="1"/>
</dbReference>
<dbReference type="SMART" id="SM00729">
    <property type="entry name" value="Elp3"/>
    <property type="match status" value="1"/>
</dbReference>
<dbReference type="SUPFAM" id="SSF102114">
    <property type="entry name" value="Radical SAM enzymes"/>
    <property type="match status" value="1"/>
</dbReference>
<dbReference type="PROSITE" id="PS51918">
    <property type="entry name" value="RADICAL_SAM"/>
    <property type="match status" value="1"/>
</dbReference>
<protein>
    <recommendedName>
        <fullName evidence="1">Biotin synthase</fullName>
        <ecNumber evidence="1">2.8.1.6</ecNumber>
    </recommendedName>
</protein>
<accession>A5D4Y6</accession>
<feature type="chain" id="PRO_0000381523" description="Biotin synthase">
    <location>
        <begin position="1"/>
        <end position="321"/>
    </location>
</feature>
<feature type="domain" description="Radical SAM core" evidence="2">
    <location>
        <begin position="45"/>
        <end position="274"/>
    </location>
</feature>
<feature type="binding site" evidence="1">
    <location>
        <position position="63"/>
    </location>
    <ligand>
        <name>[4Fe-4S] cluster</name>
        <dbReference type="ChEBI" id="CHEBI:49883"/>
        <note>4Fe-4S-S-AdoMet</note>
    </ligand>
</feature>
<feature type="binding site" evidence="1">
    <location>
        <position position="67"/>
    </location>
    <ligand>
        <name>[4Fe-4S] cluster</name>
        <dbReference type="ChEBI" id="CHEBI:49883"/>
        <note>4Fe-4S-S-AdoMet</note>
    </ligand>
</feature>
<feature type="binding site" evidence="1">
    <location>
        <position position="70"/>
    </location>
    <ligand>
        <name>[4Fe-4S] cluster</name>
        <dbReference type="ChEBI" id="CHEBI:49883"/>
        <note>4Fe-4S-S-AdoMet</note>
    </ligand>
</feature>
<feature type="binding site" evidence="1">
    <location>
        <position position="139"/>
    </location>
    <ligand>
        <name>[2Fe-2S] cluster</name>
        <dbReference type="ChEBI" id="CHEBI:190135"/>
    </ligand>
</feature>
<feature type="binding site" evidence="1">
    <location>
        <position position="199"/>
    </location>
    <ligand>
        <name>[2Fe-2S] cluster</name>
        <dbReference type="ChEBI" id="CHEBI:190135"/>
    </ligand>
</feature>
<feature type="binding site" evidence="1">
    <location>
        <position position="269"/>
    </location>
    <ligand>
        <name>[2Fe-2S] cluster</name>
        <dbReference type="ChEBI" id="CHEBI:190135"/>
    </ligand>
</feature>
<evidence type="ECO:0000255" key="1">
    <source>
        <dbReference type="HAMAP-Rule" id="MF_01694"/>
    </source>
</evidence>
<evidence type="ECO:0000255" key="2">
    <source>
        <dbReference type="PROSITE-ProRule" id="PRU01266"/>
    </source>
</evidence>
<organism>
    <name type="scientific">Pelotomaculum thermopropionicum (strain DSM 13744 / JCM 10971 / SI)</name>
    <dbReference type="NCBI Taxonomy" id="370438"/>
    <lineage>
        <taxon>Bacteria</taxon>
        <taxon>Bacillati</taxon>
        <taxon>Bacillota</taxon>
        <taxon>Clostridia</taxon>
        <taxon>Eubacteriales</taxon>
        <taxon>Desulfotomaculaceae</taxon>
        <taxon>Pelotomaculum</taxon>
    </lineage>
</organism>
<name>BIOB_PELTS</name>
<keyword id="KW-0001">2Fe-2S</keyword>
<keyword id="KW-0004">4Fe-4S</keyword>
<keyword id="KW-0093">Biotin biosynthesis</keyword>
<keyword id="KW-0408">Iron</keyword>
<keyword id="KW-0411">Iron-sulfur</keyword>
<keyword id="KW-0479">Metal-binding</keyword>
<keyword id="KW-1185">Reference proteome</keyword>
<keyword id="KW-0949">S-adenosyl-L-methionine</keyword>
<keyword id="KW-0808">Transferase</keyword>
<reference key="1">
    <citation type="journal article" date="2008" name="Genome Res.">
        <title>The genome of Pelotomaculum thermopropionicum reveals niche-associated evolution in anaerobic microbiota.</title>
        <authorList>
            <person name="Kosaka T."/>
            <person name="Kato S."/>
            <person name="Shimoyama T."/>
            <person name="Ishii S."/>
            <person name="Abe T."/>
            <person name="Watanabe K."/>
        </authorList>
    </citation>
    <scope>NUCLEOTIDE SEQUENCE [LARGE SCALE GENOMIC DNA]</scope>
    <source>
        <strain>DSM 13744 / JCM 10971 / SI</strain>
    </source>
</reference>
<gene>
    <name evidence="1" type="primary">bioB</name>
    <name type="ordered locus">PTH_0521</name>
</gene>
<comment type="function">
    <text evidence="1">Catalyzes the conversion of dethiobiotin (DTB) to biotin by the insertion of a sulfur atom into dethiobiotin via a radical-based mechanism.</text>
</comment>
<comment type="catalytic activity">
    <reaction evidence="1">
        <text>(4R,5S)-dethiobiotin + (sulfur carrier)-SH + 2 reduced [2Fe-2S]-[ferredoxin] + 2 S-adenosyl-L-methionine = (sulfur carrier)-H + biotin + 2 5'-deoxyadenosine + 2 L-methionine + 2 oxidized [2Fe-2S]-[ferredoxin]</text>
        <dbReference type="Rhea" id="RHEA:22060"/>
        <dbReference type="Rhea" id="RHEA-COMP:10000"/>
        <dbReference type="Rhea" id="RHEA-COMP:10001"/>
        <dbReference type="Rhea" id="RHEA-COMP:14737"/>
        <dbReference type="Rhea" id="RHEA-COMP:14739"/>
        <dbReference type="ChEBI" id="CHEBI:17319"/>
        <dbReference type="ChEBI" id="CHEBI:29917"/>
        <dbReference type="ChEBI" id="CHEBI:33737"/>
        <dbReference type="ChEBI" id="CHEBI:33738"/>
        <dbReference type="ChEBI" id="CHEBI:57586"/>
        <dbReference type="ChEBI" id="CHEBI:57844"/>
        <dbReference type="ChEBI" id="CHEBI:59789"/>
        <dbReference type="ChEBI" id="CHEBI:64428"/>
        <dbReference type="ChEBI" id="CHEBI:149473"/>
        <dbReference type="EC" id="2.8.1.6"/>
    </reaction>
</comment>
<comment type="cofactor">
    <cofactor evidence="1">
        <name>[4Fe-4S] cluster</name>
        <dbReference type="ChEBI" id="CHEBI:49883"/>
    </cofactor>
    <text evidence="1">Binds 1 [4Fe-4S] cluster. The cluster is coordinated with 3 cysteines and an exchangeable S-adenosyl-L-methionine.</text>
</comment>
<comment type="cofactor">
    <cofactor evidence="1">
        <name>[2Fe-2S] cluster</name>
        <dbReference type="ChEBI" id="CHEBI:190135"/>
    </cofactor>
    <text evidence="1">Binds 1 [2Fe-2S] cluster. The cluster is coordinated with 3 cysteines and 1 arginine.</text>
</comment>
<comment type="pathway">
    <text evidence="1">Cofactor biosynthesis; biotin biosynthesis; biotin from 7,8-diaminononanoate: step 2/2.</text>
</comment>
<comment type="subunit">
    <text evidence="1">Homodimer.</text>
</comment>
<comment type="similarity">
    <text evidence="1">Belongs to the radical SAM superfamily. Biotin synthase family.</text>
</comment>
<proteinExistence type="inferred from homology"/>